<name>PAP1_ARATH</name>
<accession>O81439</accession>
<evidence type="ECO:0000255" key="1"/>
<evidence type="ECO:0000269" key="2">
    <source>
    </source>
</evidence>
<evidence type="ECO:0000269" key="3">
    <source>
    </source>
</evidence>
<evidence type="ECO:0000269" key="4">
    <source>
    </source>
</evidence>
<evidence type="ECO:0000269" key="5">
    <source>
    </source>
</evidence>
<evidence type="ECO:0000269" key="6">
    <source>
    </source>
</evidence>
<evidence type="ECO:0000269" key="7">
    <source>
    </source>
</evidence>
<evidence type="ECO:0000305" key="8"/>
<evidence type="ECO:0000305" key="9">
    <source>
    </source>
</evidence>
<evidence type="ECO:0007744" key="10">
    <source>
    </source>
</evidence>
<feature type="transit peptide" description="Chloroplast" evidence="1">
    <location>
        <begin position="1"/>
        <end position="55"/>
    </location>
</feature>
<feature type="chain" id="PRO_0000023208" description="Probable plastid-lipid-associated protein 1, chloroplastic">
    <location>
        <begin position="56"/>
        <end position="318"/>
    </location>
</feature>
<feature type="modified residue" description="Phosphothreonine" evidence="10">
    <location>
        <position position="57"/>
    </location>
</feature>
<dbReference type="EMBL" id="AF075598">
    <property type="protein sequence ID" value="AAC28198.1"/>
    <property type="molecule type" value="Genomic_DNA"/>
</dbReference>
<dbReference type="EMBL" id="AL161499">
    <property type="protein sequence ID" value="CAB77870.1"/>
    <property type="molecule type" value="Genomic_DNA"/>
</dbReference>
<dbReference type="EMBL" id="CP002687">
    <property type="protein sequence ID" value="AEE82363.1"/>
    <property type="molecule type" value="Genomic_DNA"/>
</dbReference>
<dbReference type="EMBL" id="AY120766">
    <property type="protein sequence ID" value="AAM53324.1"/>
    <property type="molecule type" value="mRNA"/>
</dbReference>
<dbReference type="EMBL" id="BT000148">
    <property type="protein sequence ID" value="AAN15467.1"/>
    <property type="molecule type" value="mRNA"/>
</dbReference>
<dbReference type="EMBL" id="AY085330">
    <property type="protein sequence ID" value="AAM62561.1"/>
    <property type="molecule type" value="mRNA"/>
</dbReference>
<dbReference type="PIR" id="T01472">
    <property type="entry name" value="T01472"/>
</dbReference>
<dbReference type="RefSeq" id="NP_192311.1">
    <property type="nucleotide sequence ID" value="NM_116640.5"/>
</dbReference>
<dbReference type="SMR" id="O81439"/>
<dbReference type="BioGRID" id="11027">
    <property type="interactions" value="14"/>
</dbReference>
<dbReference type="DIP" id="DIP-37456N"/>
<dbReference type="FunCoup" id="O81439">
    <property type="interactions" value="285"/>
</dbReference>
<dbReference type="IntAct" id="O81439">
    <property type="interactions" value="15"/>
</dbReference>
<dbReference type="MINT" id="O81439"/>
<dbReference type="STRING" id="3702.O81439"/>
<dbReference type="iPTMnet" id="O81439"/>
<dbReference type="PaxDb" id="3702-AT4G04020.1"/>
<dbReference type="ProteomicsDB" id="236839"/>
<dbReference type="EnsemblPlants" id="AT4G04020.1">
    <property type="protein sequence ID" value="AT4G04020.1"/>
    <property type="gene ID" value="AT4G04020"/>
</dbReference>
<dbReference type="GeneID" id="825714"/>
<dbReference type="Gramene" id="AT4G04020.1">
    <property type="protein sequence ID" value="AT4G04020.1"/>
    <property type="gene ID" value="AT4G04020"/>
</dbReference>
<dbReference type="KEGG" id="ath:AT4G04020"/>
<dbReference type="Araport" id="AT4G04020"/>
<dbReference type="TAIR" id="AT4G04020">
    <property type="gene designation" value="FIB"/>
</dbReference>
<dbReference type="eggNOG" id="ENOG502QS2T">
    <property type="taxonomic scope" value="Eukaryota"/>
</dbReference>
<dbReference type="HOGENOM" id="CLU_045041_1_0_1"/>
<dbReference type="InParanoid" id="O81439"/>
<dbReference type="OMA" id="SQFPCKT"/>
<dbReference type="PhylomeDB" id="O81439"/>
<dbReference type="CD-CODE" id="4299E36E">
    <property type="entry name" value="Nucleolus"/>
</dbReference>
<dbReference type="PRO" id="PR:O81439"/>
<dbReference type="Proteomes" id="UP000006548">
    <property type="component" value="Chromosome 4"/>
</dbReference>
<dbReference type="ExpressionAtlas" id="O81439">
    <property type="expression patterns" value="baseline and differential"/>
</dbReference>
<dbReference type="GO" id="GO:0009507">
    <property type="term" value="C:chloroplast"/>
    <property type="evidence" value="ECO:0007005"/>
    <property type="project" value="TAIR"/>
</dbReference>
<dbReference type="GO" id="GO:0009570">
    <property type="term" value="C:chloroplast stroma"/>
    <property type="evidence" value="ECO:0007005"/>
    <property type="project" value="TAIR"/>
</dbReference>
<dbReference type="GO" id="GO:0009534">
    <property type="term" value="C:chloroplast thylakoid"/>
    <property type="evidence" value="ECO:0007005"/>
    <property type="project" value="TAIR"/>
</dbReference>
<dbReference type="GO" id="GO:0009535">
    <property type="term" value="C:chloroplast thylakoid membrane"/>
    <property type="evidence" value="ECO:0007005"/>
    <property type="project" value="TAIR"/>
</dbReference>
<dbReference type="GO" id="GO:0005829">
    <property type="term" value="C:cytosol"/>
    <property type="evidence" value="ECO:0007005"/>
    <property type="project" value="TAIR"/>
</dbReference>
<dbReference type="GO" id="GO:0005634">
    <property type="term" value="C:nucleus"/>
    <property type="evidence" value="ECO:0007005"/>
    <property type="project" value="TAIR"/>
</dbReference>
<dbReference type="GO" id="GO:0009536">
    <property type="term" value="C:plastid"/>
    <property type="evidence" value="ECO:0000314"/>
    <property type="project" value="TAIR"/>
</dbReference>
<dbReference type="GO" id="GO:0010287">
    <property type="term" value="C:plastoglobule"/>
    <property type="evidence" value="ECO:0007005"/>
    <property type="project" value="TAIR"/>
</dbReference>
<dbReference type="GO" id="GO:0010319">
    <property type="term" value="C:stromule"/>
    <property type="evidence" value="ECO:0000314"/>
    <property type="project" value="TAIR"/>
</dbReference>
<dbReference type="GO" id="GO:0009579">
    <property type="term" value="C:thylakoid"/>
    <property type="evidence" value="ECO:0007005"/>
    <property type="project" value="TAIR"/>
</dbReference>
<dbReference type="GO" id="GO:0031977">
    <property type="term" value="C:thylakoid lumen"/>
    <property type="evidence" value="ECO:0007005"/>
    <property type="project" value="TAIR"/>
</dbReference>
<dbReference type="GO" id="GO:0010205">
    <property type="term" value="P:photoinhibition"/>
    <property type="evidence" value="ECO:0000315"/>
    <property type="project" value="TAIR"/>
</dbReference>
<dbReference type="GO" id="GO:0009737">
    <property type="term" value="P:response to abscisic acid"/>
    <property type="evidence" value="ECO:0000270"/>
    <property type="project" value="TAIR"/>
</dbReference>
<dbReference type="GO" id="GO:0009409">
    <property type="term" value="P:response to cold"/>
    <property type="evidence" value="ECO:0000270"/>
    <property type="project" value="TAIR"/>
</dbReference>
<dbReference type="InterPro" id="IPR039633">
    <property type="entry name" value="PAP"/>
</dbReference>
<dbReference type="InterPro" id="IPR006843">
    <property type="entry name" value="PAP/fibrillin_dom"/>
</dbReference>
<dbReference type="PANTHER" id="PTHR31906">
    <property type="entry name" value="PLASTID-LIPID-ASSOCIATED PROTEIN 4, CHLOROPLASTIC-RELATED"/>
    <property type="match status" value="1"/>
</dbReference>
<dbReference type="Pfam" id="PF04755">
    <property type="entry name" value="PAP_fibrillin"/>
    <property type="match status" value="1"/>
</dbReference>
<sequence length="318" mass="34948">MATVPLFTQFPCKTLNPSSSNTKHQSKSPILLPINSINRRSEIGVSVHRPDFKIRATDIDDEWGQDGVERVFASSSTVSVADKAIESVEETERLKRSLADSLYGTDRGLSVSSDTRAEISELITQLESKNPTPAPNEALFLLNGKWILAYTSFVGLFPLLSRRIEPLVKVDEISQTIDSDSFTVQNSVRFAGPFSTTSFSTNAKFEIRSPKRVQIKFEQGVIGTPQLTDSIEIPESVEVLGQKIDLNPIKGLLTSVQDTASSVARTISNQPPLKFSLPSDNTQSWLLTTYLDKDLRISRGDGGSVYVLIKEGSSLLNP</sequence>
<reference key="1">
    <citation type="journal article" date="1999" name="Nature">
        <title>Sequence and analysis of chromosome 4 of the plant Arabidopsis thaliana.</title>
        <authorList>
            <person name="Mayer K.F.X."/>
            <person name="Schueller C."/>
            <person name="Wambutt R."/>
            <person name="Murphy G."/>
            <person name="Volckaert G."/>
            <person name="Pohl T."/>
            <person name="Duesterhoeft A."/>
            <person name="Stiekema W."/>
            <person name="Entian K.-D."/>
            <person name="Terryn N."/>
            <person name="Harris B."/>
            <person name="Ansorge W."/>
            <person name="Brandt P."/>
            <person name="Grivell L.A."/>
            <person name="Rieger M."/>
            <person name="Weichselgartner M."/>
            <person name="de Simone V."/>
            <person name="Obermaier B."/>
            <person name="Mache R."/>
            <person name="Mueller M."/>
            <person name="Kreis M."/>
            <person name="Delseny M."/>
            <person name="Puigdomenech P."/>
            <person name="Watson M."/>
            <person name="Schmidtheini T."/>
            <person name="Reichert B."/>
            <person name="Portetelle D."/>
            <person name="Perez-Alonso M."/>
            <person name="Boutry M."/>
            <person name="Bancroft I."/>
            <person name="Vos P."/>
            <person name="Hoheisel J."/>
            <person name="Zimmermann W."/>
            <person name="Wedler H."/>
            <person name="Ridley P."/>
            <person name="Langham S.-A."/>
            <person name="McCullagh B."/>
            <person name="Bilham L."/>
            <person name="Robben J."/>
            <person name="van der Schueren J."/>
            <person name="Grymonprez B."/>
            <person name="Chuang Y.-J."/>
            <person name="Vandenbussche F."/>
            <person name="Braeken M."/>
            <person name="Weltjens I."/>
            <person name="Voet M."/>
            <person name="Bastiaens I."/>
            <person name="Aert R."/>
            <person name="Defoor E."/>
            <person name="Weitzenegger T."/>
            <person name="Bothe G."/>
            <person name="Ramsperger U."/>
            <person name="Hilbert H."/>
            <person name="Braun M."/>
            <person name="Holzer E."/>
            <person name="Brandt A."/>
            <person name="Peters S."/>
            <person name="van Staveren M."/>
            <person name="Dirkse W."/>
            <person name="Mooijman P."/>
            <person name="Klein Lankhorst R."/>
            <person name="Rose M."/>
            <person name="Hauf J."/>
            <person name="Koetter P."/>
            <person name="Berneiser S."/>
            <person name="Hempel S."/>
            <person name="Feldpausch M."/>
            <person name="Lamberth S."/>
            <person name="Van den Daele H."/>
            <person name="De Keyser A."/>
            <person name="Buysshaert C."/>
            <person name="Gielen J."/>
            <person name="Villarroel R."/>
            <person name="De Clercq R."/>
            <person name="van Montagu M."/>
            <person name="Rogers J."/>
            <person name="Cronin A."/>
            <person name="Quail M.A."/>
            <person name="Bray-Allen S."/>
            <person name="Clark L."/>
            <person name="Doggett J."/>
            <person name="Hall S."/>
            <person name="Kay M."/>
            <person name="Lennard N."/>
            <person name="McLay K."/>
            <person name="Mayes R."/>
            <person name="Pettett A."/>
            <person name="Rajandream M.A."/>
            <person name="Lyne M."/>
            <person name="Benes V."/>
            <person name="Rechmann S."/>
            <person name="Borkova D."/>
            <person name="Bloecker H."/>
            <person name="Scharfe M."/>
            <person name="Grimm M."/>
            <person name="Loehnert T.-H."/>
            <person name="Dose S."/>
            <person name="de Haan M."/>
            <person name="Maarse A.C."/>
            <person name="Schaefer M."/>
            <person name="Mueller-Auer S."/>
            <person name="Gabel C."/>
            <person name="Fuchs M."/>
            <person name="Fartmann B."/>
            <person name="Granderath K."/>
            <person name="Dauner D."/>
            <person name="Herzl A."/>
            <person name="Neumann S."/>
            <person name="Argiriou A."/>
            <person name="Vitale D."/>
            <person name="Liguori R."/>
            <person name="Piravandi E."/>
            <person name="Massenet O."/>
            <person name="Quigley F."/>
            <person name="Clabauld G."/>
            <person name="Muendlein A."/>
            <person name="Felber R."/>
            <person name="Schnabl S."/>
            <person name="Hiller R."/>
            <person name="Schmidt W."/>
            <person name="Lecharny A."/>
            <person name="Aubourg S."/>
            <person name="Chefdor F."/>
            <person name="Cooke R."/>
            <person name="Berger C."/>
            <person name="Monfort A."/>
            <person name="Casacuberta E."/>
            <person name="Gibbons T."/>
            <person name="Weber N."/>
            <person name="Vandenbol M."/>
            <person name="Bargues M."/>
            <person name="Terol J."/>
            <person name="Torres A."/>
            <person name="Perez-Perez A."/>
            <person name="Purnelle B."/>
            <person name="Bent E."/>
            <person name="Johnson S."/>
            <person name="Tacon D."/>
            <person name="Jesse T."/>
            <person name="Heijnen L."/>
            <person name="Schwarz S."/>
            <person name="Scholler P."/>
            <person name="Heber S."/>
            <person name="Francs P."/>
            <person name="Bielke C."/>
            <person name="Frishman D."/>
            <person name="Haase D."/>
            <person name="Lemcke K."/>
            <person name="Mewes H.-W."/>
            <person name="Stocker S."/>
            <person name="Zaccaria P."/>
            <person name="Bevan M."/>
            <person name="Wilson R.K."/>
            <person name="de la Bastide M."/>
            <person name="Habermann K."/>
            <person name="Parnell L."/>
            <person name="Dedhia N."/>
            <person name="Gnoj L."/>
            <person name="Schutz K."/>
            <person name="Huang E."/>
            <person name="Spiegel L."/>
            <person name="Sekhon M."/>
            <person name="Murray J."/>
            <person name="Sheet P."/>
            <person name="Cordes M."/>
            <person name="Abu-Threideh J."/>
            <person name="Stoneking T."/>
            <person name="Kalicki J."/>
            <person name="Graves T."/>
            <person name="Harmon G."/>
            <person name="Edwards J."/>
            <person name="Latreille P."/>
            <person name="Courtney L."/>
            <person name="Cloud J."/>
            <person name="Abbott A."/>
            <person name="Scott K."/>
            <person name="Johnson D."/>
            <person name="Minx P."/>
            <person name="Bentley D."/>
            <person name="Fulton B."/>
            <person name="Miller N."/>
            <person name="Greco T."/>
            <person name="Kemp K."/>
            <person name="Kramer J."/>
            <person name="Fulton L."/>
            <person name="Mardis E."/>
            <person name="Dante M."/>
            <person name="Pepin K."/>
            <person name="Hillier L.W."/>
            <person name="Nelson J."/>
            <person name="Spieth J."/>
            <person name="Ryan E."/>
            <person name="Andrews S."/>
            <person name="Geisel C."/>
            <person name="Layman D."/>
            <person name="Du H."/>
            <person name="Ali J."/>
            <person name="Berghoff A."/>
            <person name="Jones K."/>
            <person name="Drone K."/>
            <person name="Cotton M."/>
            <person name="Joshu C."/>
            <person name="Antonoiu B."/>
            <person name="Zidanic M."/>
            <person name="Strong C."/>
            <person name="Sun H."/>
            <person name="Lamar B."/>
            <person name="Yordan C."/>
            <person name="Ma P."/>
            <person name="Zhong J."/>
            <person name="Preston R."/>
            <person name="Vil D."/>
            <person name="Shekher M."/>
            <person name="Matero A."/>
            <person name="Shah R."/>
            <person name="Swaby I.K."/>
            <person name="O'Shaughnessy A."/>
            <person name="Rodriguez M."/>
            <person name="Hoffman J."/>
            <person name="Till S."/>
            <person name="Granat S."/>
            <person name="Shohdy N."/>
            <person name="Hasegawa A."/>
            <person name="Hameed A."/>
            <person name="Lodhi M."/>
            <person name="Johnson A."/>
            <person name="Chen E."/>
            <person name="Marra M.A."/>
            <person name="Martienssen R."/>
            <person name="McCombie W.R."/>
        </authorList>
    </citation>
    <scope>NUCLEOTIDE SEQUENCE [LARGE SCALE GENOMIC DNA]</scope>
    <source>
        <strain>cv. Columbia</strain>
    </source>
</reference>
<reference key="2">
    <citation type="journal article" date="2017" name="Plant J.">
        <title>Araport11: a complete reannotation of the Arabidopsis thaliana reference genome.</title>
        <authorList>
            <person name="Cheng C.Y."/>
            <person name="Krishnakumar V."/>
            <person name="Chan A.P."/>
            <person name="Thibaud-Nissen F."/>
            <person name="Schobel S."/>
            <person name="Town C.D."/>
        </authorList>
    </citation>
    <scope>GENOME REANNOTATION</scope>
    <source>
        <strain>cv. Columbia</strain>
    </source>
</reference>
<reference key="3">
    <citation type="journal article" date="2003" name="Science">
        <title>Empirical analysis of transcriptional activity in the Arabidopsis genome.</title>
        <authorList>
            <person name="Yamada K."/>
            <person name="Lim J."/>
            <person name="Dale J.M."/>
            <person name="Chen H."/>
            <person name="Shinn P."/>
            <person name="Palm C.J."/>
            <person name="Southwick A.M."/>
            <person name="Wu H.C."/>
            <person name="Kim C.J."/>
            <person name="Nguyen M."/>
            <person name="Pham P.K."/>
            <person name="Cheuk R.F."/>
            <person name="Karlin-Newmann G."/>
            <person name="Liu S.X."/>
            <person name="Lam B."/>
            <person name="Sakano H."/>
            <person name="Wu T."/>
            <person name="Yu G."/>
            <person name="Miranda M."/>
            <person name="Quach H.L."/>
            <person name="Tripp M."/>
            <person name="Chang C.H."/>
            <person name="Lee J.M."/>
            <person name="Toriumi M.J."/>
            <person name="Chan M.M."/>
            <person name="Tang C.C."/>
            <person name="Onodera C.S."/>
            <person name="Deng J.M."/>
            <person name="Akiyama K."/>
            <person name="Ansari Y."/>
            <person name="Arakawa T."/>
            <person name="Banh J."/>
            <person name="Banno F."/>
            <person name="Bowser L."/>
            <person name="Brooks S.Y."/>
            <person name="Carninci P."/>
            <person name="Chao Q."/>
            <person name="Choy N."/>
            <person name="Enju A."/>
            <person name="Goldsmith A.D."/>
            <person name="Gurjal M."/>
            <person name="Hansen N.F."/>
            <person name="Hayashizaki Y."/>
            <person name="Johnson-Hopson C."/>
            <person name="Hsuan V.W."/>
            <person name="Iida K."/>
            <person name="Karnes M."/>
            <person name="Khan S."/>
            <person name="Koesema E."/>
            <person name="Ishida J."/>
            <person name="Jiang P.X."/>
            <person name="Jones T."/>
            <person name="Kawai J."/>
            <person name="Kamiya A."/>
            <person name="Meyers C."/>
            <person name="Nakajima M."/>
            <person name="Narusaka M."/>
            <person name="Seki M."/>
            <person name="Sakurai T."/>
            <person name="Satou M."/>
            <person name="Tamse R."/>
            <person name="Vaysberg M."/>
            <person name="Wallender E.K."/>
            <person name="Wong C."/>
            <person name="Yamamura Y."/>
            <person name="Yuan S."/>
            <person name="Shinozaki K."/>
            <person name="Davis R.W."/>
            <person name="Theologis A."/>
            <person name="Ecker J.R."/>
        </authorList>
    </citation>
    <scope>NUCLEOTIDE SEQUENCE [LARGE SCALE MRNA]</scope>
    <source>
        <strain>cv. Columbia</strain>
    </source>
</reference>
<reference key="4">
    <citation type="submission" date="2002-03" db="EMBL/GenBank/DDBJ databases">
        <title>Full-length cDNA from Arabidopsis thaliana.</title>
        <authorList>
            <person name="Brover V.V."/>
            <person name="Troukhan M.E."/>
            <person name="Alexandrov N.A."/>
            <person name="Lu Y.-P."/>
            <person name="Flavell R.B."/>
            <person name="Feldmann K.A."/>
        </authorList>
    </citation>
    <scope>NUCLEOTIDE SEQUENCE [LARGE SCALE MRNA]</scope>
</reference>
<reference key="5">
    <citation type="journal article" date="2002" name="J. Biol. Chem.">
        <title>Proteome map of the chloroplast lumen of Arabidopsis thaliana.</title>
        <authorList>
            <person name="Schubert M."/>
            <person name="Petersson U.A."/>
            <person name="Haas B.J."/>
            <person name="Funk C."/>
            <person name="Schroeder W.P."/>
            <person name="Kieselbach T."/>
        </authorList>
    </citation>
    <scope>PROTEIN SEQUENCE OF 56-62</scope>
    <scope>SUBCELLULAR LOCATION</scope>
</reference>
<reference key="6">
    <citation type="journal article" date="2006" name="J. Biol. Chem.">
        <title>Tocopherol cyclase (VTE1) localization and vitamin E accumulation in chloroplast plastoglobule lipoprotein particles.</title>
        <authorList>
            <person name="Vidi P.-A."/>
            <person name="Kanwischer M."/>
            <person name="Baginsky S."/>
            <person name="Austin J.R."/>
            <person name="Csucs G."/>
            <person name="Doermann P."/>
            <person name="Kessler F."/>
            <person name="Brehelin C."/>
        </authorList>
    </citation>
    <scope>SUBCELLULAR LOCATION</scope>
    <source>
        <strain>cv. Col-2</strain>
    </source>
</reference>
<reference key="7">
    <citation type="journal article" date="2006" name="Plant Physiol.">
        <title>Protein profiling of plastoglobules in chloroplasts and chromoplasts. A surprising site for differential accumulation of metabolic enzymes.</title>
        <authorList>
            <person name="Ytterberg A.J."/>
            <person name="Peltier J.-B."/>
            <person name="van Wijk K.J."/>
        </authorList>
    </citation>
    <scope>IDENTIFICATION BY MASS SPECTROMETRY</scope>
    <scope>SUBCELLULAR LOCATION [LARGE SCALE ANALYSIS]</scope>
    <source>
        <strain>cv. Columbia</strain>
    </source>
</reference>
<reference key="8">
    <citation type="journal article" date="2006" name="Proc. Natl. Acad. Sci. U.S.A.">
        <title>Fibrillin expression is regulated by abscisic acid response regulators and is involved in abscisic acid-mediated photoprotection.</title>
        <authorList>
            <person name="Yang Y."/>
            <person name="Sulpice R."/>
            <person name="Himmelbach A."/>
            <person name="Meinhard M."/>
            <person name="Christmann A."/>
            <person name="Grill E."/>
        </authorList>
    </citation>
    <scope>FUNCTION</scope>
    <scope>INDUCTION BY ABSCISIC ACID</scope>
    <scope>INTERACTION WITH ABI2</scope>
</reference>
<reference key="9">
    <citation type="journal article" date="2009" name="Plant Physiol.">
        <title>Large-scale Arabidopsis phosphoproteome profiling reveals novel chloroplast kinase substrates and phosphorylation networks.</title>
        <authorList>
            <person name="Reiland S."/>
            <person name="Messerli G."/>
            <person name="Baerenfaller K."/>
            <person name="Gerrits B."/>
            <person name="Endler A."/>
            <person name="Grossmann J."/>
            <person name="Gruissem W."/>
            <person name="Baginsky S."/>
        </authorList>
    </citation>
    <scope>PHOSPHORYLATION [LARGE SCALE ANALYSIS] AT THR-57</scope>
    <scope>IDENTIFICATION BY MASS SPECTROMETRY [LARGE SCALE ANALYSIS]</scope>
</reference>
<reference key="10">
    <citation type="journal article" date="2010" name="Plant J.">
        <title>Plant lipid-associated fibrillin proteins condition jasmonate production under photosynthetic stress.</title>
        <authorList>
            <person name="Youssef A."/>
            <person name="Laizet Y."/>
            <person name="Block M.A."/>
            <person name="Marechal E."/>
            <person name="Alcaraz J.P."/>
            <person name="Larson T.R."/>
            <person name="Pontier D."/>
            <person name="Gaffe J."/>
            <person name="Kuntz M."/>
        </authorList>
    </citation>
    <scope>FUNCTION</scope>
</reference>
<reference key="11">
    <citation type="journal article" date="2011" name="Trends Plant Sci.">
        <title>Fibrillin protein function: the tip of the iceberg?</title>
        <authorList>
            <person name="Singh D.K."/>
            <person name="McNellis T.W."/>
        </authorList>
    </citation>
    <scope>GENE FAMILY</scope>
    <scope>NOMENCLATURE</scope>
</reference>
<reference key="12">
    <citation type="journal article" date="2012" name="Plant Physiol.">
        <title>The functional network of the Arabidopsis plastoglobule proteome based on quantitative proteomics and genome-wide coexpression analysis.</title>
        <authorList>
            <person name="Lundquist P.K."/>
            <person name="Poliakov A."/>
            <person name="Bhuiyan N.H."/>
            <person name="Zybailov B."/>
            <person name="Sun Q."/>
            <person name="van Wijk K.J."/>
        </authorList>
    </citation>
    <scope>IDENTIFICATION BY MASS SPECTROMETRY</scope>
    <scope>SUBCELLULAR LOCATION [LARGE SCALE ANALYSIS]</scope>
    <source>
        <strain>cv. Columbia</strain>
    </source>
</reference>
<reference key="13">
    <citation type="journal article" date="2013" name="Plant Mol. Biol.">
        <title>Dual targeting of a mature plastoglobulin/fibrillin fusion protein to chloroplast plastoglobules and thylakoids in transplastomic tobacco plants.</title>
        <authorList>
            <person name="Shanmugabalaji V."/>
            <person name="Besagni C."/>
            <person name="Piller L.E."/>
            <person name="Douet V."/>
            <person name="Ruf S."/>
            <person name="Bock R."/>
            <person name="Kessler F."/>
        </authorList>
    </citation>
    <scope>SUBCELLULAR LOCATION</scope>
    <source>
        <strain>cv. Columbia</strain>
    </source>
</reference>
<reference key="14">
    <citation type="journal article" date="2013" name="Plant Sci.">
        <title>Development and disintegration of tapetum-specific lipid-accumulating organelles, elaioplasts and tapetosomes, in Arabidopsis thaliana and Brassica napus.</title>
        <authorList>
            <person name="Suzuki T."/>
            <person name="Tsunekawa S."/>
            <person name="Koizuka C."/>
            <person name="Yamamoto K."/>
            <person name="Imamura J."/>
            <person name="Nakamura K."/>
            <person name="Ishiguro S."/>
        </authorList>
    </citation>
    <scope>TISSUE SPECIFICITY</scope>
    <scope>SUBCELLULAR LOCATION</scope>
    <scope>DEVELOPMENTAL STAGE</scope>
    <source>
        <strain>cv. Columbia</strain>
    </source>
</reference>
<proteinExistence type="evidence at protein level"/>
<keyword id="KW-0150">Chloroplast</keyword>
<keyword id="KW-0903">Direct protein sequencing</keyword>
<keyword id="KW-0597">Phosphoprotein</keyword>
<keyword id="KW-0934">Plastid</keyword>
<keyword id="KW-1185">Reference proteome</keyword>
<keyword id="KW-0793">Thylakoid</keyword>
<keyword id="KW-0809">Transit peptide</keyword>
<organism>
    <name type="scientific">Arabidopsis thaliana</name>
    <name type="common">Mouse-ear cress</name>
    <dbReference type="NCBI Taxonomy" id="3702"/>
    <lineage>
        <taxon>Eukaryota</taxon>
        <taxon>Viridiplantae</taxon>
        <taxon>Streptophyta</taxon>
        <taxon>Embryophyta</taxon>
        <taxon>Tracheophyta</taxon>
        <taxon>Spermatophyta</taxon>
        <taxon>Magnoliopsida</taxon>
        <taxon>eudicotyledons</taxon>
        <taxon>Gunneridae</taxon>
        <taxon>Pentapetalae</taxon>
        <taxon>rosids</taxon>
        <taxon>malvids</taxon>
        <taxon>Brassicales</taxon>
        <taxon>Brassicaceae</taxon>
        <taxon>Camelineae</taxon>
        <taxon>Arabidopsis</taxon>
    </lineage>
</organism>
<protein>
    <recommendedName>
        <fullName>Probable plastid-lipid-associated protein 1, chloroplastic</fullName>
        <shortName>AtPap1</shortName>
    </recommendedName>
    <alternativeName>
        <fullName>Fibrillin-1a</fullName>
    </alternativeName>
    <alternativeName>
        <fullName>Plastoglobulin 35</fullName>
        <shortName>AtPGL35</shortName>
    </alternativeName>
</protein>
<comment type="function">
    <text evidence="4 5">Probably involved in light/cold stress-related jasmonate (JA) biosynthesis. Contributes to the protection of photosystem II (PSII) against light stress.</text>
</comment>
<comment type="subunit">
    <text evidence="4">Interacts (via N-terminus) with ABI2.</text>
</comment>
<comment type="interaction">
    <interactant intactId="EBI-962363">
        <id>O81439</id>
    </interactant>
    <interactant intactId="EBI-537680">
        <id>O04719</id>
        <label>ABI2</label>
    </interactant>
    <organismsDiffer>false</organismsDiffer>
    <experiments>5</experiments>
</comment>
<comment type="subcellular location">
    <subcellularLocation>
        <location evidence="2 3 6">Plastid</location>
        <location evidence="2 3 6">Chloroplast</location>
        <location evidence="2 3 6">Plastoglobule</location>
    </subcellularLocation>
    <subcellularLocation>
        <location>Plastid</location>
        <location>Chloroplast thylakoid</location>
    </subcellularLocation>
    <text>Located in the elaioplast, a tapetum-specific plastidial lipid organelle.</text>
</comment>
<comment type="tissue specificity">
    <text evidence="7">Expressed in flower buds. Detected in tapetal cells, endothecium and connective in anthers and in subepidermal cells in filaments.</text>
</comment>
<comment type="developmental stage">
    <text evidence="7">Expressed throughout anther development.</text>
</comment>
<comment type="induction">
    <text evidence="4">Up-regulated by abscisic acid.</text>
</comment>
<comment type="miscellaneous">
    <text evidence="9">Simultaneous down-regulation of PAP1, PAP2 and PAP3 leads to impaired long-term acclimation to environmental constraint, namely photooxidative stress imposed by high light combined with cold.</text>
</comment>
<comment type="similarity">
    <text evidence="8">Belongs to the PAP/fibrillin family.</text>
</comment>
<gene>
    <name type="primary">PAP1</name>
    <name type="synonym">FBN1a</name>
    <name type="synonym">FIB1a</name>
    <name type="synonym">PGL35</name>
    <name type="ordered locus">At4g04020</name>
    <name type="ORF">T24H24.16</name>
</gene>